<name>GRIP2_RAT</name>
<organism>
    <name type="scientific">Rattus norvegicus</name>
    <name type="common">Rat</name>
    <dbReference type="NCBI Taxonomy" id="10116"/>
    <lineage>
        <taxon>Eukaryota</taxon>
        <taxon>Metazoa</taxon>
        <taxon>Chordata</taxon>
        <taxon>Craniata</taxon>
        <taxon>Vertebrata</taxon>
        <taxon>Euteleostomi</taxon>
        <taxon>Mammalia</taxon>
        <taxon>Eutheria</taxon>
        <taxon>Euarchontoglires</taxon>
        <taxon>Glires</taxon>
        <taxon>Rodentia</taxon>
        <taxon>Myomorpha</taxon>
        <taxon>Muroidea</taxon>
        <taxon>Muridae</taxon>
        <taxon>Murinae</taxon>
        <taxon>Rattus</taxon>
    </lineage>
</organism>
<dbReference type="EMBL" id="AF090113">
    <property type="protein sequence ID" value="AAC36313.1"/>
    <property type="molecule type" value="mRNA"/>
</dbReference>
<dbReference type="EMBL" id="AF072509">
    <property type="protein sequence ID" value="AAD25916.1"/>
    <property type="molecule type" value="mRNA"/>
</dbReference>
<dbReference type="EMBL" id="AF205193">
    <property type="protein sequence ID" value="AAF19028.1"/>
    <property type="molecule type" value="mRNA"/>
</dbReference>
<dbReference type="EMBL" id="AF112182">
    <property type="protein sequence ID" value="AAD28427.1"/>
    <property type="status" value="ALT_INIT"/>
    <property type="molecule type" value="mRNA"/>
</dbReference>
<dbReference type="RefSeq" id="NP_612544.2">
    <molecule id="Q9WTW1-1"/>
    <property type="nucleotide sequence ID" value="NM_138535.2"/>
</dbReference>
<dbReference type="RefSeq" id="XP_006236957.1">
    <molecule id="Q9WTW1-2"/>
    <property type="nucleotide sequence ID" value="XM_006236895.5"/>
</dbReference>
<dbReference type="RefSeq" id="XP_038962917.1">
    <molecule id="Q9WTW1-4"/>
    <property type="nucleotide sequence ID" value="XM_039106989.2"/>
</dbReference>
<dbReference type="SMR" id="Q9WTW1"/>
<dbReference type="FunCoup" id="Q9WTW1">
    <property type="interactions" value="292"/>
</dbReference>
<dbReference type="IntAct" id="Q9WTW1">
    <property type="interactions" value="5"/>
</dbReference>
<dbReference type="MINT" id="Q9WTW1"/>
<dbReference type="STRING" id="10116.ENSRNOP00000041016"/>
<dbReference type="TCDB" id="8.A.24.1.4">
    <property type="family name" value="the ezrin/radixin/moesin-binding phosphoprotein 50 (ebp50) family"/>
</dbReference>
<dbReference type="GlyGen" id="Q9WTW1">
    <property type="glycosylation" value="1 site"/>
</dbReference>
<dbReference type="iPTMnet" id="Q9WTW1"/>
<dbReference type="PhosphoSitePlus" id="Q9WTW1"/>
<dbReference type="SwissPalm" id="Q9WTW1"/>
<dbReference type="PaxDb" id="10116-ENSRNOP00000041016"/>
<dbReference type="Ensembl" id="ENSRNOT00000013232.7">
    <molecule id="Q9WTW1-2"/>
    <property type="protein sequence ID" value="ENSRNOP00000013232.6"/>
    <property type="gene ID" value="ENSRNOG00000009726.8"/>
</dbReference>
<dbReference type="Ensembl" id="ENSRNOT00000049657.6">
    <molecule id="Q9WTW1-1"/>
    <property type="protein sequence ID" value="ENSRNOP00000041016.3"/>
    <property type="gene ID" value="ENSRNOG00000009726.8"/>
</dbReference>
<dbReference type="GeneID" id="171571"/>
<dbReference type="KEGG" id="rno:171571"/>
<dbReference type="UCSC" id="RGD:621668">
    <molecule id="Q9WTW1-1"/>
    <property type="organism name" value="rat"/>
</dbReference>
<dbReference type="AGR" id="RGD:621668"/>
<dbReference type="CTD" id="80852"/>
<dbReference type="RGD" id="621668">
    <property type="gene designation" value="Grip2"/>
</dbReference>
<dbReference type="eggNOG" id="KOG3528">
    <property type="taxonomic scope" value="Eukaryota"/>
</dbReference>
<dbReference type="GeneTree" id="ENSGT00940000155615"/>
<dbReference type="HOGENOM" id="CLU_004313_0_0_1"/>
<dbReference type="InParanoid" id="Q9WTW1"/>
<dbReference type="OMA" id="ETKTHDY"/>
<dbReference type="PhylomeDB" id="Q9WTW1"/>
<dbReference type="TreeFam" id="TF326909"/>
<dbReference type="Reactome" id="R-RNO-416993">
    <property type="pathway name" value="Trafficking of GluR2-containing AMPA receptors"/>
</dbReference>
<dbReference type="PRO" id="PR:Q9WTW1"/>
<dbReference type="Proteomes" id="UP000002494">
    <property type="component" value="Chromosome 4"/>
</dbReference>
<dbReference type="Bgee" id="ENSRNOG00000009726">
    <property type="expression patterns" value="Expressed in cerebellum and 9 other cell types or tissues"/>
</dbReference>
<dbReference type="ExpressionAtlas" id="Q9WTW1">
    <property type="expression patterns" value="baseline and differential"/>
</dbReference>
<dbReference type="GO" id="GO:0005737">
    <property type="term" value="C:cytoplasm"/>
    <property type="evidence" value="ECO:0000314"/>
    <property type="project" value="MGI"/>
</dbReference>
<dbReference type="GO" id="GO:0005856">
    <property type="term" value="C:cytoskeleton"/>
    <property type="evidence" value="ECO:0007669"/>
    <property type="project" value="UniProtKB-SubCell"/>
</dbReference>
<dbReference type="GO" id="GO:0030425">
    <property type="term" value="C:dendrite"/>
    <property type="evidence" value="ECO:0000314"/>
    <property type="project" value="UniProtKB"/>
</dbReference>
<dbReference type="GO" id="GO:0043198">
    <property type="term" value="C:dendritic shaft"/>
    <property type="evidence" value="ECO:0000314"/>
    <property type="project" value="UniProtKB"/>
</dbReference>
<dbReference type="GO" id="GO:0043197">
    <property type="term" value="C:dendritic spine"/>
    <property type="evidence" value="ECO:0007669"/>
    <property type="project" value="UniProtKB-SubCell"/>
</dbReference>
<dbReference type="GO" id="GO:0005783">
    <property type="term" value="C:endoplasmic reticulum"/>
    <property type="evidence" value="ECO:0007669"/>
    <property type="project" value="UniProtKB-SubCell"/>
</dbReference>
<dbReference type="GO" id="GO:0098978">
    <property type="term" value="C:glutamatergic synapse"/>
    <property type="evidence" value="ECO:0000314"/>
    <property type="project" value="SynGO"/>
</dbReference>
<dbReference type="GO" id="GO:0044309">
    <property type="term" value="C:neuron spine"/>
    <property type="evidence" value="ECO:0000314"/>
    <property type="project" value="UniProtKB"/>
</dbReference>
<dbReference type="GO" id="GO:0043025">
    <property type="term" value="C:neuronal cell body"/>
    <property type="evidence" value="ECO:0000314"/>
    <property type="project" value="RGD"/>
</dbReference>
<dbReference type="GO" id="GO:0005886">
    <property type="term" value="C:plasma membrane"/>
    <property type="evidence" value="ECO:0000314"/>
    <property type="project" value="MGI"/>
</dbReference>
<dbReference type="GO" id="GO:0014069">
    <property type="term" value="C:postsynaptic density"/>
    <property type="evidence" value="ECO:0000314"/>
    <property type="project" value="UniProtKB"/>
</dbReference>
<dbReference type="GO" id="GO:0099092">
    <property type="term" value="C:postsynaptic density, intracellular component"/>
    <property type="evidence" value="ECO:0000314"/>
    <property type="project" value="SynGO"/>
</dbReference>
<dbReference type="GO" id="GO:0045211">
    <property type="term" value="C:postsynaptic membrane"/>
    <property type="evidence" value="ECO:0000314"/>
    <property type="project" value="UniProtKB"/>
</dbReference>
<dbReference type="GO" id="GO:0035254">
    <property type="term" value="F:glutamate receptor binding"/>
    <property type="evidence" value="ECO:0000314"/>
    <property type="project" value="MGI"/>
</dbReference>
<dbReference type="GO" id="GO:0014824">
    <property type="term" value="P:artery smooth muscle contraction"/>
    <property type="evidence" value="ECO:0000266"/>
    <property type="project" value="RGD"/>
</dbReference>
<dbReference type="GO" id="GO:0098887">
    <property type="term" value="P:neurotransmitter receptor transport, endosome to postsynaptic membrane"/>
    <property type="evidence" value="ECO:0000266"/>
    <property type="project" value="RGD"/>
</dbReference>
<dbReference type="GO" id="GO:0007219">
    <property type="term" value="P:Notch signaling pathway"/>
    <property type="evidence" value="ECO:0000266"/>
    <property type="project" value="RGD"/>
</dbReference>
<dbReference type="GO" id="GO:1904719">
    <property type="term" value="P:positive regulation of AMPA glutamate receptor clustering"/>
    <property type="evidence" value="ECO:0000315"/>
    <property type="project" value="UniProtKB"/>
</dbReference>
<dbReference type="GO" id="GO:0045777">
    <property type="term" value="P:positive regulation of blood pressure"/>
    <property type="evidence" value="ECO:0000266"/>
    <property type="project" value="RGD"/>
</dbReference>
<dbReference type="GO" id="GO:2000463">
    <property type="term" value="P:positive regulation of excitatory postsynaptic potential"/>
    <property type="evidence" value="ECO:0000315"/>
    <property type="project" value="UniProtKB"/>
</dbReference>
<dbReference type="GO" id="GO:0014042">
    <property type="term" value="P:positive regulation of neuron maturation"/>
    <property type="evidence" value="ECO:0000315"/>
    <property type="project" value="UniProtKB"/>
</dbReference>
<dbReference type="GO" id="GO:0099003">
    <property type="term" value="P:vesicle-mediated transport in synapse"/>
    <property type="evidence" value="ECO:0000266"/>
    <property type="project" value="RGD"/>
</dbReference>
<dbReference type="CDD" id="cd06687">
    <property type="entry name" value="PDZ1_GRIP1-2-like"/>
    <property type="match status" value="1"/>
</dbReference>
<dbReference type="CDD" id="cd06681">
    <property type="entry name" value="PDZ2_GRIP1-2-like"/>
    <property type="match status" value="1"/>
</dbReference>
<dbReference type="CDD" id="cd06684">
    <property type="entry name" value="PDZ3_GRIP1-2-like"/>
    <property type="match status" value="1"/>
</dbReference>
<dbReference type="CDD" id="cd06686">
    <property type="entry name" value="PDZ4_GRIP1-2-like"/>
    <property type="match status" value="1"/>
</dbReference>
<dbReference type="CDD" id="cd06682">
    <property type="entry name" value="PDZ5_GRIP1-2-like"/>
    <property type="match status" value="1"/>
</dbReference>
<dbReference type="CDD" id="cd06683">
    <property type="entry name" value="PDZ6_GRIP1-2-like"/>
    <property type="match status" value="1"/>
</dbReference>
<dbReference type="CDD" id="cd06685">
    <property type="entry name" value="PDZ7_GRIP1-2-like"/>
    <property type="match status" value="1"/>
</dbReference>
<dbReference type="FunFam" id="2.30.42.10:FF:000021">
    <property type="entry name" value="Glutamate receptor interacting protein 1"/>
    <property type="match status" value="1"/>
</dbReference>
<dbReference type="FunFam" id="2.30.42.10:FF:000022">
    <property type="entry name" value="Glutamate receptor interacting protein 1"/>
    <property type="match status" value="1"/>
</dbReference>
<dbReference type="FunFam" id="2.30.42.10:FF:000023">
    <property type="entry name" value="Glutamate receptor interacting protein 1"/>
    <property type="match status" value="1"/>
</dbReference>
<dbReference type="FunFam" id="2.30.42.10:FF:000025">
    <property type="entry name" value="Glutamate receptor interacting protein 1"/>
    <property type="match status" value="1"/>
</dbReference>
<dbReference type="FunFam" id="2.30.42.10:FF:000031">
    <property type="entry name" value="Glutamate receptor interacting protein 1"/>
    <property type="match status" value="1"/>
</dbReference>
<dbReference type="FunFam" id="2.30.42.10:FF:000034">
    <property type="entry name" value="Glutamate receptor interacting protein 1"/>
    <property type="match status" value="1"/>
</dbReference>
<dbReference type="FunFam" id="2.30.42.10:FF:000035">
    <property type="entry name" value="Glutamate receptor interacting protein 1"/>
    <property type="match status" value="1"/>
</dbReference>
<dbReference type="Gene3D" id="2.30.42.10">
    <property type="match status" value="7"/>
</dbReference>
<dbReference type="InterPro" id="IPR043545">
    <property type="entry name" value="GRIP1/2"/>
</dbReference>
<dbReference type="InterPro" id="IPR001478">
    <property type="entry name" value="PDZ"/>
</dbReference>
<dbReference type="InterPro" id="IPR041489">
    <property type="entry name" value="PDZ_6"/>
</dbReference>
<dbReference type="InterPro" id="IPR036034">
    <property type="entry name" value="PDZ_sf"/>
</dbReference>
<dbReference type="PANTHER" id="PTHR46227:SF4">
    <property type="entry name" value="GLUTAMATE RECEPTOR-INTERACTING PROTEIN 2"/>
    <property type="match status" value="1"/>
</dbReference>
<dbReference type="PANTHER" id="PTHR46227">
    <property type="entry name" value="GLUTAMATE RECEPTOR-INTERACTING PROTEIN GRIP"/>
    <property type="match status" value="1"/>
</dbReference>
<dbReference type="Pfam" id="PF00595">
    <property type="entry name" value="PDZ"/>
    <property type="match status" value="6"/>
</dbReference>
<dbReference type="Pfam" id="PF17820">
    <property type="entry name" value="PDZ_6"/>
    <property type="match status" value="1"/>
</dbReference>
<dbReference type="SMART" id="SM00228">
    <property type="entry name" value="PDZ"/>
    <property type="match status" value="7"/>
</dbReference>
<dbReference type="SUPFAM" id="SSF50156">
    <property type="entry name" value="PDZ domain-like"/>
    <property type="match status" value="7"/>
</dbReference>
<dbReference type="PROSITE" id="PS50106">
    <property type="entry name" value="PDZ"/>
    <property type="match status" value="7"/>
</dbReference>
<evidence type="ECO:0000250" key="1"/>
<evidence type="ECO:0000255" key="2">
    <source>
        <dbReference type="PROSITE-ProRule" id="PRU00143"/>
    </source>
</evidence>
<evidence type="ECO:0000256" key="3">
    <source>
        <dbReference type="SAM" id="MobiDB-lite"/>
    </source>
</evidence>
<evidence type="ECO:0000269" key="4">
    <source>
    </source>
</evidence>
<evidence type="ECO:0000269" key="5">
    <source>
    </source>
</evidence>
<evidence type="ECO:0000269" key="6">
    <source>
    </source>
</evidence>
<evidence type="ECO:0000269" key="7">
    <source>
    </source>
</evidence>
<evidence type="ECO:0000269" key="8">
    <source>
    </source>
</evidence>
<evidence type="ECO:0000269" key="9">
    <source>
    </source>
</evidence>
<evidence type="ECO:0000269" key="10">
    <source>
    </source>
</evidence>
<evidence type="ECO:0000303" key="11">
    <source>
    </source>
</evidence>
<evidence type="ECO:0000303" key="12">
    <source>
    </source>
</evidence>
<evidence type="ECO:0000303" key="13">
    <source>
    </source>
</evidence>
<evidence type="ECO:0000305" key="14"/>
<evidence type="ECO:0007744" key="15">
    <source>
    </source>
</evidence>
<keyword id="KW-0025">Alternative splicing</keyword>
<keyword id="KW-1003">Cell membrane</keyword>
<keyword id="KW-0966">Cell projection</keyword>
<keyword id="KW-0963">Cytoplasm</keyword>
<keyword id="KW-0206">Cytoskeleton</keyword>
<keyword id="KW-0256">Endoplasmic reticulum</keyword>
<keyword id="KW-0449">Lipoprotein</keyword>
<keyword id="KW-0472">Membrane</keyword>
<keyword id="KW-0564">Palmitate</keyword>
<keyword id="KW-0597">Phosphoprotein</keyword>
<keyword id="KW-1185">Reference proteome</keyword>
<keyword id="KW-0677">Repeat</keyword>
<keyword id="KW-0770">Synapse</keyword>
<protein>
    <recommendedName>
        <fullName>Glutamate receptor-interacting protein 2</fullName>
        <shortName>GRIP-2</shortName>
    </recommendedName>
    <alternativeName>
        <fullName>AMPA receptor-interacting protein GRIP2</fullName>
    </alternativeName>
</protein>
<accession>Q9WTW1</accession>
<accession>O88961</accession>
<accession>Q9WU36</accession>
<proteinExistence type="evidence at protein level"/>
<comment type="function">
    <text>May play a role as a localized scaffold for the assembly of a multiprotein signaling complex and as mediator of the trafficking of its binding partners at specific subcellular location in neurons.</text>
</comment>
<comment type="subunit">
    <text evidence="1 4 5 7 9 10">Interacts with the C-terminal tail of PRLHR (By similarity). Interacts with EFNB1, EFNB3, GRIA2, GRIA3, CSGP4 and GRIPAP1. Can form homomultimers and heteromultimers with GRIP1.</text>
</comment>
<comment type="interaction">
    <interactant intactId="EBI-936045">
        <id>Q9WTW1</id>
    </interactant>
    <interactant intactId="EBI-8327479">
        <id>Q8VHY0</id>
        <label>Cspg4</label>
    </interactant>
    <organismsDiffer>true</organismsDiffer>
    <experiments>2</experiments>
</comment>
<comment type="interaction">
    <interactant intactId="EBI-936068">
        <id>Q9WTW1-3</id>
    </interactant>
    <interactant intactId="EBI-77718">
        <id>P19491</id>
        <label>Gria2</label>
    </interactant>
    <organismsDiffer>false</organismsDiffer>
    <experiments>7</experiments>
</comment>
<comment type="interaction">
    <interactant intactId="EBI-936068">
        <id>Q9WTW1-3</id>
    </interactant>
    <interactant intactId="EBI-936113">
        <id>P97879</id>
        <label>Grip1</label>
    </interactant>
    <organismsDiffer>false</organismsDiffer>
    <experiments>3</experiments>
</comment>
<comment type="subcellular location">
    <molecule>Isoform 1</molecule>
    <subcellularLocation>
        <location>Cell membrane</location>
    </subcellularLocation>
    <subcellularLocation>
        <location>Postsynaptic density</location>
    </subcellularLocation>
    <text>Isoform 1 was found in synaptic plasma membrane and postsynaptic density.</text>
</comment>
<comment type="subcellular location">
    <molecule>Isoform 2</molecule>
    <subcellularLocation>
        <location>Cytoplasm</location>
    </subcellularLocation>
    <subcellularLocation>
        <location>Membrane</location>
        <topology>Peripheral membrane protein</topology>
    </subcellularLocation>
    <subcellularLocation>
        <location>Synapse</location>
    </subcellularLocation>
    <text>Isoform 2 was found at excitatory synapses and also at non-synaptic membranes and within intracellular compartments.</text>
</comment>
<comment type="subcellular location">
    <molecule>Isoform 3</molecule>
    <subcellularLocation>
        <location>Cell membrane</location>
    </subcellularLocation>
    <subcellularLocation>
        <location>Postsynaptic density</location>
    </subcellularLocation>
    <subcellularLocation>
        <location>Cell projection</location>
        <location>Dendritic spine</location>
    </subcellularLocation>
    <subcellularLocation>
        <location>Endoplasmic reticulum</location>
    </subcellularLocation>
    <subcellularLocation>
        <location>Cytoplasm</location>
        <location>Cytoskeleton</location>
    </subcellularLocation>
    <text>Isoform 3 was found in synaptic plasma membrane and postsynaptic density. Isoform 3 was also found in dendrites where it was associated with microtubules, endoplasmic reticulum and dendritic spines.</text>
</comment>
<comment type="subcellular location">
    <molecule>Isoform 4</molecule>
    <subcellularLocation>
        <location>Membrane</location>
        <topology>Peripheral membrane protein</topology>
    </subcellularLocation>
    <text evidence="8">Isoform 4 was exclusively membrane associated.</text>
</comment>
<comment type="alternative products">
    <event type="alternative splicing"/>
    <isoform>
        <id>Q9WTW1-1</id>
        <name>1</name>
        <sequence type="displayed"/>
    </isoform>
    <isoform>
        <id>Q9WTW1-2</id>
        <name>2</name>
        <name>ABP-L</name>
        <name>ABP-L/GRIP2</name>
        <sequence type="described" ref="VSP_009761"/>
    </isoform>
    <isoform>
        <id>Q9WTW1-3</id>
        <name>3</name>
        <name>ABP</name>
        <name>ABP-S</name>
        <sequence type="described" ref="VSP_009760 VSP_009762 VSP_009763"/>
    </isoform>
    <isoform>
        <id>Q9WTW1-4</id>
        <name>4</name>
        <name>pABP-L</name>
        <sequence type="described" ref="VSP_009759"/>
    </isoform>
</comment>
<comment type="tissue specificity">
    <text evidence="6 8 10">Brain specific. Isoform 1 is expressed in the olfactory bulb, cortex and hippocampus and was also expressed at lower levels in thalamus, cerebellum and spinal cord. Isoform 3 is expressed in pyramidal cells of cortex and hippocampus, striatum, thalamus, hypothalamus, stellate cells of cerebellum, and brainstem. Isoform 2 and isoform 4 are expressed in cortex, hippocampus, thalamus, cerebellum, brainstem and spinal cord. In hippocampal neurons isoform 4 is found abundantly in spine structures. Isoform 2 is abundant in the cell body and also found in dendritic shafts.</text>
</comment>
<comment type="developmental stage">
    <text evidence="4 6 10">Isoform 1 expression was relatively low early in development and increased postnatally, reaching a peak at P14. Isoform 3 is detected at low levels prior to P9, whereupon its expression increases, with the highest levels in the adult.</text>
</comment>
<comment type="domain">
    <text evidence="9">PDZ 5 mediates the C-terminal binding of GRIA2 and GRIA3. PDZ 6 mediates interaction with the PDZ recognition motif of EFNB1. PDZ 7 mediates interaction with CSPG4.</text>
</comment>
<comment type="PTM">
    <text evidence="8">Palmitoylation of isoform 4 mediates membrane location.</text>
</comment>
<comment type="similarity">
    <text evidence="14">Belongs to the GRIP2 family.</text>
</comment>
<comment type="sequence caution" evidence="14">
    <conflict type="erroneous initiation">
        <sequence resource="EMBL-CDS" id="AAD28427"/>
    </conflict>
</comment>
<reference key="1">
    <citation type="journal article" date="1998" name="Neuron">
        <title>Novel anchorage of GluR2/3 to the postsynaptic density by the AMPA receptor-binding protein ABP.</title>
        <authorList>
            <person name="Srivastava S."/>
            <person name="Osten P."/>
            <person name="Vilim F.S."/>
            <person name="Khatri L."/>
            <person name="Inman G."/>
            <person name="States B."/>
            <person name="Daly C."/>
            <person name="DeSouza S."/>
            <person name="Abagyan R."/>
            <person name="Valtschanoff J.G."/>
            <person name="Weinberg R.J."/>
            <person name="Ziff E.B."/>
        </authorList>
    </citation>
    <scope>NUCLEOTIDE SEQUENCE [MRNA] (ISOFORM 3)</scope>
    <scope>TISSUE SPECIFICITY</scope>
    <scope>DEVELOPMENTAL STAGE</scope>
    <scope>SUBCELLULAR LOCATION</scope>
    <scope>INTERACTION WITH GRIA2 AND GRIA3</scope>
</reference>
<reference key="2">
    <citation type="journal article" date="1999" name="Neuron">
        <title>EphrinB ligands recruit GRIP family PDZ adaptor proteins into raft membrane microdomains.</title>
        <authorList>
            <person name="Brueckner K."/>
            <person name="Pablo Labrador J."/>
            <person name="Scheiffele P."/>
            <person name="Herb A."/>
            <person name="Seeburg P.H."/>
            <person name="Klein R."/>
        </authorList>
    </citation>
    <scope>NUCLEOTIDE SEQUENCE [MRNA] (ISOFORM 1)</scope>
    <scope>DEVELOPMENTAL STAGE</scope>
    <scope>INTERACTION WITH EFNB1 AND EFNB3</scope>
    <source>
        <tissue>Hippocampus</tissue>
    </source>
</reference>
<reference key="3">
    <citation type="journal article" date="1999" name="J. Neurosci.">
        <title>Characterization of the glutamate receptor-interacting proteins GRIP1 and GRIP2.</title>
        <authorList>
            <person name="Dong H."/>
            <person name="Zhang P."/>
            <person name="Song I."/>
            <person name="Petralia R.S."/>
            <person name="Liao D."/>
            <person name="Huganir R.L."/>
        </authorList>
    </citation>
    <scope>NUCLEOTIDE SEQUENCE [MRNA] (ISOFORM 1)</scope>
    <scope>TISSUE SPECIFICITY</scope>
    <scope>DEVELOPMENTAL STAGE</scope>
    <scope>SUBCELLULAR LOCATION</scope>
    <source>
        <tissue>Hippocampus</tissue>
    </source>
</reference>
<reference key="4">
    <citation type="journal article" date="1999" name="J. Neurosci.">
        <title>Association of AMPA receptors with a subset of glutamate receptor-interacting protein in vivo.</title>
        <authorList>
            <person name="Wyszynski M."/>
            <person name="Valtschanoff J.G."/>
            <person name="Naisbitt S."/>
            <person name="Dunah A.W."/>
            <person name="Kim E."/>
            <person name="Standaert D.G."/>
            <person name="Weinberg R."/>
            <person name="Sheng M."/>
        </authorList>
    </citation>
    <scope>NUCLEOTIDE SEQUENCE [MRNA] (ISOFORM 2)</scope>
    <scope>SUBCELLULAR LOCATION</scope>
    <scope>INTERACTION WITH GRIA2 AND GRIA3</scope>
</reference>
<reference key="5">
    <citation type="journal article" date="2002" name="J. Neurosci.">
        <title>Differential palmitoylation directs the AMPA receptor-binding protein ABP to spines or to intracellular clusters.</title>
        <authorList>
            <person name="DeSouza S."/>
            <person name="Fu J."/>
            <person name="States B.A."/>
            <person name="Ziff E.B."/>
        </authorList>
    </citation>
    <scope>NUCLEOTIDE SEQUENCE [MRNA] (ISOFORM 4)</scope>
    <scope>TISSUE SPECIFICITY</scope>
    <scope>SUBCELLULAR LOCATION</scope>
    <scope>PALMITOYLATION AT CYS-11 (ISOFORM 4)</scope>
</reference>
<reference key="6">
    <citation type="journal article" date="2000" name="Neuron">
        <title>GRASP-1: a neuronal RasGEF associated with the AMPA receptor/GRIP complex.</title>
        <authorList>
            <person name="Ye B."/>
            <person name="Liao D."/>
            <person name="Zhang X."/>
            <person name="Zhang P."/>
            <person name="Dong H."/>
            <person name="Huganir R.L."/>
        </authorList>
    </citation>
    <scope>INTERACTION WITH GRIPAP1</scope>
</reference>
<reference key="7">
    <citation type="journal article" date="2003" name="J. Biol. Chem.">
        <title>The proteoglycan NG2 is complexed with alpha-amino-3-hydroxy-5-methyl-4-isoxazolepropionic acid (AMPA) receptors by the PDZ glutamate receptor interaction protein (GRIP) in glial progenitor cells. Implications for glial-neuronal signaling.</title>
        <authorList>
            <person name="Stegmueller J."/>
            <person name="Werner H."/>
            <person name="Nave K.-A."/>
            <person name="Trotter J."/>
        </authorList>
    </citation>
    <scope>INTERACTION WITH CSGP4</scope>
    <scope>DOMAIN</scope>
</reference>
<reference key="8">
    <citation type="journal article" date="2012" name="Nat. Commun.">
        <title>Quantitative maps of protein phosphorylation sites across 14 different rat organs and tissues.</title>
        <authorList>
            <person name="Lundby A."/>
            <person name="Secher A."/>
            <person name="Lage K."/>
            <person name="Nordsborg N.B."/>
            <person name="Dmytriyev A."/>
            <person name="Lundby C."/>
            <person name="Olsen J.V."/>
        </authorList>
    </citation>
    <scope>PHOSPHORYLATION [LARGE SCALE ANALYSIS] AT SER-43</scope>
    <scope>IDENTIFICATION BY MASS SPECTROMETRY [LARGE SCALE ANALYSIS]</scope>
</reference>
<sequence>MLAVSLKWRLGVVRRRPKDDGPYSKGGKDTAGTDGALVCRRQSIPEEFRGITMVELIKREGSTLGLTISGGTDKDGKPRVSNLRPGGLAARSDLLNVGDYIRSVNGIRLTRLRHDEIITLLKNVGERVVLEVEYELPPPAPENNPRIISKTVDVSLYKEGNSFGFVLRGGAHEDLHKSRPLVLTYVRPGGPADREGSLKVGDRLLSIDGIPLHGASHATAIATLQQCSHEALFQVEYDVATPDTVANASGPLVVEIAKTPGSALGISLTTGSHRNKPAITIDRIKPASVVDRSGALHAGDHILAIDGTSTEHCSLVEATKLLASVTEKVRLEILPAPQSRRPLKPPEAVRIQRSEQLHHWDPCVPSCHSPRPSHCRAPTWAPGGQDQSRSVSSTPFSSPTMNPAFPCANASTLPRGPMSPRTTAGRRRQRRKEHRSSLSLASSTVGPGGQIVHTETTEVVLCGDPLSGFGLQLQGGIFATETLSSPPLVRFIEPDSPAERCGLLQVGDRVLAINGIATEDGTMEEANQLLRDAALARKVVLEIEFDVAESVIPSSGTFHVKLPKRRGVELGITISSASRKRGEPLIISDIKKGSVAHRTGTLEPGDKLLAIDNIRLDHCPMEYAVQILRQCEDLVKLKIRKDEDNSDEQESSGAVSYTVELKRYGGPLGITISGTEEPFDPIIISGLTKRGLAERTGAIHVGDRILAINSVSLKGRPLSEAIHLLQVAGETVTLKIKKQLDRPLLPRQSGSLSEASDVDEDPPEALKGGLLTTHFSPAVPSVDSAVESWGSSATEGGFGGSGSYTPQVAVRSVTPQEWRSSRLKSSPPPLEPRRTSYTPGPTDESFPEEEEGDWEPPMSPAPGPAREEGFWRVLGEALEDLESCGQSELLRELEASIMTGTVQSVAVDGRPGSRPWRRSREVGTSPEDLQELLLPTPLEMHRVTLHKDPVRNDFGFSVSDGLLEKGVYVHTVRIDGPAQHGGLQPFDRLLQVNHVRTRDFDCCLAVPLLAEAGDILELVVSRNPLAQSRRTPGAPGPSSPQMI</sequence>
<gene>
    <name type="primary">Grip2</name>
</gene>
<feature type="chain" id="PRO_0000083853" description="Glutamate receptor-interacting protein 2">
    <location>
        <begin position="1"/>
        <end position="1043"/>
    </location>
</feature>
<feature type="domain" description="PDZ 1" evidence="2">
    <location>
        <begin position="53"/>
        <end position="136"/>
    </location>
</feature>
<feature type="domain" description="PDZ 2" evidence="2">
    <location>
        <begin position="153"/>
        <end position="239"/>
    </location>
</feature>
<feature type="domain" description="PDZ 3" evidence="2">
    <location>
        <begin position="253"/>
        <end position="337"/>
    </location>
</feature>
<feature type="domain" description="PDZ 4" evidence="2">
    <location>
        <begin position="458"/>
        <end position="547"/>
    </location>
</feature>
<feature type="domain" description="PDZ 5" evidence="2">
    <location>
        <begin position="559"/>
        <end position="643"/>
    </location>
</feature>
<feature type="domain" description="PDZ 6" evidence="2">
    <location>
        <begin position="658"/>
        <end position="740"/>
    </location>
</feature>
<feature type="domain" description="PDZ 7" evidence="2">
    <location>
        <begin position="942"/>
        <end position="1024"/>
    </location>
</feature>
<feature type="region of interest" description="Disordered" evidence="3">
    <location>
        <begin position="371"/>
        <end position="450"/>
    </location>
</feature>
<feature type="region of interest" description="Disordered" evidence="3">
    <location>
        <begin position="745"/>
        <end position="769"/>
    </location>
</feature>
<feature type="region of interest" description="Disordered" evidence="3">
    <location>
        <begin position="786"/>
        <end position="863"/>
    </location>
</feature>
<feature type="compositionally biased region" description="Low complexity" evidence="3">
    <location>
        <begin position="388"/>
        <end position="400"/>
    </location>
</feature>
<feature type="compositionally biased region" description="Basic residues" evidence="3">
    <location>
        <begin position="424"/>
        <end position="434"/>
    </location>
</feature>
<feature type="compositionally biased region" description="Acidic residues" evidence="3">
    <location>
        <begin position="845"/>
        <end position="854"/>
    </location>
</feature>
<feature type="modified residue" description="Phosphoserine" evidence="15">
    <location>
        <position position="43"/>
    </location>
</feature>
<feature type="splice variant" id="VSP_009760" description="In isoform 3." evidence="13">
    <location>
        <begin position="1"/>
        <end position="52"/>
    </location>
</feature>
<feature type="splice variant" id="VSP_009759" description="In isoform 4." evidence="12">
    <original>MLAVSLKWRLGVVRRRPK</original>
    <variation>MRGWRRNLALCLQRLPDE</variation>
    <location>
        <begin position="1"/>
        <end position="18"/>
    </location>
</feature>
<feature type="splice variant" id="VSP_009761" description="In isoform 2." evidence="11">
    <original>VRIQRSEQLHHWDPCVPSCHSPRPSHCRAPTWAPGGQDQSRS</original>
    <variation>A</variation>
    <location>
        <begin position="349"/>
        <end position="390"/>
    </location>
</feature>
<feature type="splice variant" id="VSP_009762" description="In isoform 3." evidence="13">
    <original>SPAPGPAREEGFWRVL</original>
    <variation>RHPVSPLSTPSHLPLF</variation>
    <location>
        <begin position="859"/>
        <end position="874"/>
    </location>
</feature>
<feature type="splice variant" id="VSP_009763" description="In isoform 3." evidence="13">
    <location>
        <begin position="875"/>
        <end position="1043"/>
    </location>
</feature>
<feature type="sequence conflict" description="In Ref. 4; AAD28427." evidence="14" ref="4">
    <original>Q</original>
    <variation>H</variation>
    <location>
        <position position="450"/>
    </location>
</feature>
<feature type="lipid moiety-binding region" description="S-palmitoyl cysteine" evidence="8">
    <location sequence="Q9WTW1-4">
        <position position="11"/>
    </location>
</feature>